<gene>
    <name evidence="1" type="primary">rho</name>
    <name type="ordered locus">SF3856</name>
    <name type="ordered locus">S3903</name>
</gene>
<protein>
    <recommendedName>
        <fullName evidence="1">Transcription termination factor Rho</fullName>
        <ecNumber evidence="1">3.6.4.-</ecNumber>
    </recommendedName>
    <alternativeName>
        <fullName evidence="1">ATP-dependent helicase Rho</fullName>
    </alternativeName>
</protein>
<sequence length="419" mass="47004">MNLTELKNTPVSELITLGENMGLENLARMRKQDIIFAILKQHAKSGEDIFGDGVLEILQDGFGFLRSADSSYLAGPDDIYVSPSQIRRFNLRTGDTISGKIRPPKEGERYFALLKVNEVNFDKPENARNKILFENLTPLHANSRLRMERGNGSTEDLTARVLDLASPIGRGQRGLIVAPPKAGKTMLLQNIAQSIAYNHPDCVLMVLLIDERPEEVTEMQRLVKGEVVASTFDEPASRHVQVAEMVIEKAKRLVEHKKDVIILLDSITRLARAYNTVVPASGKVLTGGVDANALHRPKRFFGAARNVEEGGSLTIIATALIDTGSKMDEVIYEEFKGTGNMELHLSRKIAEKRVFPAIDYNRSGTRKEELLTTQEELQKMWILRKIIHPMGEIDAMEFLINKLAMTKTNDDFFEMMKRS</sequence>
<keyword id="KW-0067">ATP-binding</keyword>
<keyword id="KW-0347">Helicase</keyword>
<keyword id="KW-0378">Hydrolase</keyword>
<keyword id="KW-0547">Nucleotide-binding</keyword>
<keyword id="KW-1185">Reference proteome</keyword>
<keyword id="KW-0694">RNA-binding</keyword>
<keyword id="KW-0804">Transcription</keyword>
<keyword id="KW-0805">Transcription regulation</keyword>
<keyword id="KW-0806">Transcription termination</keyword>
<name>RHO_SHIFL</name>
<comment type="function">
    <text evidence="1">Facilitates transcription termination by a mechanism that involves Rho binding to the nascent RNA, activation of Rho's RNA-dependent ATPase activity, and release of the mRNA from the DNA template.</text>
</comment>
<comment type="subunit">
    <text evidence="1">Homohexamer. The homohexamer assembles into an open ring structure.</text>
</comment>
<comment type="similarity">
    <text evidence="1">Belongs to the Rho family.</text>
</comment>
<accession>P0AG33</accession>
<accession>P03002</accession>
<accession>Q48357</accession>
<organism>
    <name type="scientific">Shigella flexneri</name>
    <dbReference type="NCBI Taxonomy" id="623"/>
    <lineage>
        <taxon>Bacteria</taxon>
        <taxon>Pseudomonadati</taxon>
        <taxon>Pseudomonadota</taxon>
        <taxon>Gammaproteobacteria</taxon>
        <taxon>Enterobacterales</taxon>
        <taxon>Enterobacteriaceae</taxon>
        <taxon>Shigella</taxon>
    </lineage>
</organism>
<feature type="chain" id="PRO_0000188978" description="Transcription termination factor Rho">
    <location>
        <begin position="1"/>
        <end position="419"/>
    </location>
</feature>
<feature type="domain" description="Rho RNA-BD" evidence="2">
    <location>
        <begin position="48"/>
        <end position="123"/>
    </location>
</feature>
<feature type="region of interest" description="RNA-binding 1" evidence="1">
    <location>
        <begin position="61"/>
        <end position="66"/>
    </location>
</feature>
<feature type="region of interest" description="RNA-binding 1" evidence="1">
    <location>
        <begin position="78"/>
        <end position="80"/>
    </location>
</feature>
<feature type="region of interest" description="RNA-binding 1" evidence="1">
    <location>
        <begin position="108"/>
        <end position="110"/>
    </location>
</feature>
<feature type="region of interest" description="RNA-binding 2" evidence="1">
    <location>
        <begin position="284"/>
        <end position="288"/>
    </location>
</feature>
<feature type="binding site" evidence="1">
    <location>
        <begin position="169"/>
        <end position="174"/>
    </location>
    <ligand>
        <name>ATP</name>
        <dbReference type="ChEBI" id="CHEBI:30616"/>
    </ligand>
</feature>
<feature type="binding site" evidence="1">
    <location>
        <begin position="181"/>
        <end position="186"/>
    </location>
    <ligand>
        <name>ATP</name>
        <dbReference type="ChEBI" id="CHEBI:30616"/>
    </ligand>
</feature>
<feature type="binding site" evidence="1">
    <location>
        <position position="212"/>
    </location>
    <ligand>
        <name>ATP</name>
        <dbReference type="ChEBI" id="CHEBI:30616"/>
    </ligand>
</feature>
<feature type="site" description="RNA-binding 2" evidence="1">
    <location>
        <position position="326"/>
    </location>
</feature>
<proteinExistence type="inferred from homology"/>
<reference key="1">
    <citation type="journal article" date="2002" name="Nucleic Acids Res.">
        <title>Genome sequence of Shigella flexneri 2a: insights into pathogenicity through comparison with genomes of Escherichia coli K12 and O157.</title>
        <authorList>
            <person name="Jin Q."/>
            <person name="Yuan Z."/>
            <person name="Xu J."/>
            <person name="Wang Y."/>
            <person name="Shen Y."/>
            <person name="Lu W."/>
            <person name="Wang J."/>
            <person name="Liu H."/>
            <person name="Yang J."/>
            <person name="Yang F."/>
            <person name="Zhang X."/>
            <person name="Zhang J."/>
            <person name="Yang G."/>
            <person name="Wu H."/>
            <person name="Qu D."/>
            <person name="Dong J."/>
            <person name="Sun L."/>
            <person name="Xue Y."/>
            <person name="Zhao A."/>
            <person name="Gao Y."/>
            <person name="Zhu J."/>
            <person name="Kan B."/>
            <person name="Ding K."/>
            <person name="Chen S."/>
            <person name="Cheng H."/>
            <person name="Yao Z."/>
            <person name="He B."/>
            <person name="Chen R."/>
            <person name="Ma D."/>
            <person name="Qiang B."/>
            <person name="Wen Y."/>
            <person name="Hou Y."/>
            <person name="Yu J."/>
        </authorList>
    </citation>
    <scope>NUCLEOTIDE SEQUENCE [LARGE SCALE GENOMIC DNA]</scope>
    <source>
        <strain>301 / Serotype 2a</strain>
    </source>
</reference>
<reference key="2">
    <citation type="journal article" date="2003" name="Infect. Immun.">
        <title>Complete genome sequence and comparative genomics of Shigella flexneri serotype 2a strain 2457T.</title>
        <authorList>
            <person name="Wei J."/>
            <person name="Goldberg M.B."/>
            <person name="Burland V."/>
            <person name="Venkatesan M.M."/>
            <person name="Deng W."/>
            <person name="Fournier G."/>
            <person name="Mayhew G.F."/>
            <person name="Plunkett G. III"/>
            <person name="Rose D.J."/>
            <person name="Darling A."/>
            <person name="Mau B."/>
            <person name="Perna N.T."/>
            <person name="Payne S.M."/>
            <person name="Runyen-Janecky L.J."/>
            <person name="Zhou S."/>
            <person name="Schwartz D.C."/>
            <person name="Blattner F.R."/>
        </authorList>
    </citation>
    <scope>NUCLEOTIDE SEQUENCE [LARGE SCALE GENOMIC DNA]</scope>
    <source>
        <strain>ATCC 700930 / 2457T / Serotype 2a</strain>
    </source>
</reference>
<dbReference type="EC" id="3.6.4.-" evidence="1"/>
<dbReference type="EMBL" id="AE005674">
    <property type="protein sequence ID" value="AAN45293.2"/>
    <property type="molecule type" value="Genomic_DNA"/>
</dbReference>
<dbReference type="EMBL" id="AE014073">
    <property type="protein sequence ID" value="AAP18904.1"/>
    <property type="molecule type" value="Genomic_DNA"/>
</dbReference>
<dbReference type="RefSeq" id="NP_709586.2">
    <property type="nucleotide sequence ID" value="NC_004337.2"/>
</dbReference>
<dbReference type="RefSeq" id="WP_001054527.1">
    <property type="nucleotide sequence ID" value="NZ_WPGW01000028.1"/>
</dbReference>
<dbReference type="SMR" id="P0AG33"/>
<dbReference type="STRING" id="198214.SF3856"/>
<dbReference type="PaxDb" id="198214-SF3856"/>
<dbReference type="GeneID" id="1025988"/>
<dbReference type="GeneID" id="93778161"/>
<dbReference type="KEGG" id="sfl:SF3856"/>
<dbReference type="KEGG" id="sfx:S3903"/>
<dbReference type="PATRIC" id="fig|198214.7.peg.4546"/>
<dbReference type="HOGENOM" id="CLU_016377_4_3_6"/>
<dbReference type="Proteomes" id="UP000001006">
    <property type="component" value="Chromosome"/>
</dbReference>
<dbReference type="Proteomes" id="UP000002673">
    <property type="component" value="Chromosome"/>
</dbReference>
<dbReference type="GO" id="GO:0005829">
    <property type="term" value="C:cytosol"/>
    <property type="evidence" value="ECO:0007669"/>
    <property type="project" value="UniProtKB-ARBA"/>
</dbReference>
<dbReference type="GO" id="GO:0005524">
    <property type="term" value="F:ATP binding"/>
    <property type="evidence" value="ECO:0007669"/>
    <property type="project" value="UniProtKB-UniRule"/>
</dbReference>
<dbReference type="GO" id="GO:0016887">
    <property type="term" value="F:ATP hydrolysis activity"/>
    <property type="evidence" value="ECO:0007669"/>
    <property type="project" value="InterPro"/>
</dbReference>
<dbReference type="GO" id="GO:0008186">
    <property type="term" value="F:ATP-dependent activity, acting on RNA"/>
    <property type="evidence" value="ECO:0007669"/>
    <property type="project" value="InterPro"/>
</dbReference>
<dbReference type="GO" id="GO:0004386">
    <property type="term" value="F:helicase activity"/>
    <property type="evidence" value="ECO:0007669"/>
    <property type="project" value="UniProtKB-UniRule"/>
</dbReference>
<dbReference type="GO" id="GO:0003723">
    <property type="term" value="F:RNA binding"/>
    <property type="evidence" value="ECO:0007669"/>
    <property type="project" value="UniProtKB-UniRule"/>
</dbReference>
<dbReference type="GO" id="GO:0006353">
    <property type="term" value="P:DNA-templated transcription termination"/>
    <property type="evidence" value="ECO:0007669"/>
    <property type="project" value="UniProtKB-UniRule"/>
</dbReference>
<dbReference type="CDD" id="cd04459">
    <property type="entry name" value="Rho_CSD"/>
    <property type="match status" value="1"/>
</dbReference>
<dbReference type="CDD" id="cd01128">
    <property type="entry name" value="rho_factor_C"/>
    <property type="match status" value="1"/>
</dbReference>
<dbReference type="FunFam" id="1.10.720.10:FF:000001">
    <property type="entry name" value="Transcription termination factor Rho"/>
    <property type="match status" value="1"/>
</dbReference>
<dbReference type="FunFam" id="2.40.50.140:FF:000010">
    <property type="entry name" value="Transcription termination factor Rho"/>
    <property type="match status" value="1"/>
</dbReference>
<dbReference type="FunFam" id="3.40.50.300:FF:000072">
    <property type="entry name" value="Transcription termination factor Rho"/>
    <property type="match status" value="1"/>
</dbReference>
<dbReference type="Gene3D" id="1.10.720.10">
    <property type="match status" value="1"/>
</dbReference>
<dbReference type="Gene3D" id="2.40.50.140">
    <property type="entry name" value="Nucleic acid-binding proteins"/>
    <property type="match status" value="1"/>
</dbReference>
<dbReference type="Gene3D" id="3.40.50.300">
    <property type="entry name" value="P-loop containing nucleotide triphosphate hydrolases"/>
    <property type="match status" value="1"/>
</dbReference>
<dbReference type="HAMAP" id="MF_01884">
    <property type="entry name" value="Rho"/>
    <property type="match status" value="1"/>
</dbReference>
<dbReference type="InterPro" id="IPR003593">
    <property type="entry name" value="AAA+_ATPase"/>
</dbReference>
<dbReference type="InterPro" id="IPR000194">
    <property type="entry name" value="ATPase_F1/V1/A1_a/bsu_nucl-bd"/>
</dbReference>
<dbReference type="InterPro" id="IPR011129">
    <property type="entry name" value="CSD"/>
</dbReference>
<dbReference type="InterPro" id="IPR012340">
    <property type="entry name" value="NA-bd_OB-fold"/>
</dbReference>
<dbReference type="InterPro" id="IPR027417">
    <property type="entry name" value="P-loop_NTPase"/>
</dbReference>
<dbReference type="InterPro" id="IPR011112">
    <property type="entry name" value="Rho-like_N"/>
</dbReference>
<dbReference type="InterPro" id="IPR041703">
    <property type="entry name" value="Rho_factor_ATP-bd"/>
</dbReference>
<dbReference type="InterPro" id="IPR036269">
    <property type="entry name" value="Rho_N_sf"/>
</dbReference>
<dbReference type="InterPro" id="IPR011113">
    <property type="entry name" value="Rho_RNA-bd"/>
</dbReference>
<dbReference type="InterPro" id="IPR004665">
    <property type="entry name" value="Term_rho"/>
</dbReference>
<dbReference type="NCBIfam" id="NF006886">
    <property type="entry name" value="PRK09376.1"/>
    <property type="match status" value="1"/>
</dbReference>
<dbReference type="NCBIfam" id="TIGR00767">
    <property type="entry name" value="rho"/>
    <property type="match status" value="1"/>
</dbReference>
<dbReference type="PANTHER" id="PTHR46425">
    <property type="entry name" value="TRANSCRIPTION TERMINATION FACTOR RHO"/>
    <property type="match status" value="1"/>
</dbReference>
<dbReference type="PANTHER" id="PTHR46425:SF1">
    <property type="entry name" value="TRANSCRIPTION TERMINATION FACTOR RHO"/>
    <property type="match status" value="1"/>
</dbReference>
<dbReference type="Pfam" id="PF00006">
    <property type="entry name" value="ATP-synt_ab"/>
    <property type="match status" value="1"/>
</dbReference>
<dbReference type="Pfam" id="PF07498">
    <property type="entry name" value="Rho_N"/>
    <property type="match status" value="1"/>
</dbReference>
<dbReference type="Pfam" id="PF07497">
    <property type="entry name" value="Rho_RNA_bind"/>
    <property type="match status" value="1"/>
</dbReference>
<dbReference type="SMART" id="SM00382">
    <property type="entry name" value="AAA"/>
    <property type="match status" value="1"/>
</dbReference>
<dbReference type="SMART" id="SM00357">
    <property type="entry name" value="CSP"/>
    <property type="match status" value="1"/>
</dbReference>
<dbReference type="SMART" id="SM00959">
    <property type="entry name" value="Rho_N"/>
    <property type="match status" value="1"/>
</dbReference>
<dbReference type="SUPFAM" id="SSF50249">
    <property type="entry name" value="Nucleic acid-binding proteins"/>
    <property type="match status" value="1"/>
</dbReference>
<dbReference type="SUPFAM" id="SSF52540">
    <property type="entry name" value="P-loop containing nucleoside triphosphate hydrolases"/>
    <property type="match status" value="1"/>
</dbReference>
<dbReference type="SUPFAM" id="SSF68912">
    <property type="entry name" value="Rho N-terminal domain-like"/>
    <property type="match status" value="1"/>
</dbReference>
<dbReference type="PROSITE" id="PS51856">
    <property type="entry name" value="RHO_RNA_BD"/>
    <property type="match status" value="1"/>
</dbReference>
<evidence type="ECO:0000255" key="1">
    <source>
        <dbReference type="HAMAP-Rule" id="MF_01884"/>
    </source>
</evidence>
<evidence type="ECO:0000255" key="2">
    <source>
        <dbReference type="PROSITE-ProRule" id="PRU01203"/>
    </source>
</evidence>